<accession>Q82WM4</accession>
<reference key="1">
    <citation type="journal article" date="2003" name="J. Bacteriol.">
        <title>Complete genome sequence of the ammonia-oxidizing bacterium and obligate chemolithoautotroph Nitrosomonas europaea.</title>
        <authorList>
            <person name="Chain P."/>
            <person name="Lamerdin J.E."/>
            <person name="Larimer F.W."/>
            <person name="Regala W."/>
            <person name="Lao V."/>
            <person name="Land M.L."/>
            <person name="Hauser L."/>
            <person name="Hooper A.B."/>
            <person name="Klotz M.G."/>
            <person name="Norton J."/>
            <person name="Sayavedra-Soto L.A."/>
            <person name="Arciero D.M."/>
            <person name="Hommes N.G."/>
            <person name="Whittaker M.M."/>
            <person name="Arp D.J."/>
        </authorList>
    </citation>
    <scope>NUCLEOTIDE SEQUENCE [LARGE SCALE GENOMIC DNA]</scope>
    <source>
        <strain>ATCC 19718 / CIP 103999 / KCTC 2705 / NBRC 14298</strain>
    </source>
</reference>
<protein>
    <recommendedName>
        <fullName evidence="1">Imidazoleglycerol-phosphate dehydratase</fullName>
        <shortName evidence="1">IGPD</shortName>
        <ecNumber evidence="1">4.2.1.19</ecNumber>
    </recommendedName>
</protein>
<evidence type="ECO:0000255" key="1">
    <source>
        <dbReference type="HAMAP-Rule" id="MF_00076"/>
    </source>
</evidence>
<dbReference type="EC" id="4.2.1.19" evidence="1"/>
<dbReference type="EMBL" id="AL954747">
    <property type="protein sequence ID" value="CAD84557.1"/>
    <property type="molecule type" value="Genomic_DNA"/>
</dbReference>
<dbReference type="SMR" id="Q82WM4"/>
<dbReference type="STRING" id="228410.NE0646"/>
<dbReference type="KEGG" id="neu:NE0646"/>
<dbReference type="eggNOG" id="COG0131">
    <property type="taxonomic scope" value="Bacteria"/>
</dbReference>
<dbReference type="HOGENOM" id="CLU_044308_2_0_4"/>
<dbReference type="OrthoDB" id="9790411at2"/>
<dbReference type="PhylomeDB" id="Q82WM4"/>
<dbReference type="UniPathway" id="UPA00031">
    <property type="reaction ID" value="UER00011"/>
</dbReference>
<dbReference type="Proteomes" id="UP000001416">
    <property type="component" value="Chromosome"/>
</dbReference>
<dbReference type="GO" id="GO:0005737">
    <property type="term" value="C:cytoplasm"/>
    <property type="evidence" value="ECO:0007669"/>
    <property type="project" value="UniProtKB-SubCell"/>
</dbReference>
<dbReference type="GO" id="GO:0004424">
    <property type="term" value="F:imidazoleglycerol-phosphate dehydratase activity"/>
    <property type="evidence" value="ECO:0007669"/>
    <property type="project" value="UniProtKB-UniRule"/>
</dbReference>
<dbReference type="GO" id="GO:0000105">
    <property type="term" value="P:L-histidine biosynthetic process"/>
    <property type="evidence" value="ECO:0007669"/>
    <property type="project" value="UniProtKB-UniRule"/>
</dbReference>
<dbReference type="CDD" id="cd07914">
    <property type="entry name" value="IGPD"/>
    <property type="match status" value="1"/>
</dbReference>
<dbReference type="FunFam" id="3.30.230.40:FF:000002">
    <property type="entry name" value="Imidazoleglycerol-phosphate dehydratase"/>
    <property type="match status" value="1"/>
</dbReference>
<dbReference type="FunFam" id="3.30.230.40:FF:000003">
    <property type="entry name" value="Imidazoleglycerol-phosphate dehydratase HisB"/>
    <property type="match status" value="1"/>
</dbReference>
<dbReference type="Gene3D" id="3.30.230.40">
    <property type="entry name" value="Imidazole glycerol phosphate dehydratase, domain 1"/>
    <property type="match status" value="2"/>
</dbReference>
<dbReference type="HAMAP" id="MF_00076">
    <property type="entry name" value="HisB"/>
    <property type="match status" value="1"/>
</dbReference>
<dbReference type="InterPro" id="IPR038494">
    <property type="entry name" value="IGPD_sf"/>
</dbReference>
<dbReference type="InterPro" id="IPR000807">
    <property type="entry name" value="ImidazoleglycerolP_deHydtase"/>
</dbReference>
<dbReference type="InterPro" id="IPR020565">
    <property type="entry name" value="ImidazoleglycerP_deHydtase_CS"/>
</dbReference>
<dbReference type="InterPro" id="IPR020568">
    <property type="entry name" value="Ribosomal_Su5_D2-typ_SF"/>
</dbReference>
<dbReference type="NCBIfam" id="NF002106">
    <property type="entry name" value="PRK00951.1-1"/>
    <property type="match status" value="1"/>
</dbReference>
<dbReference type="NCBIfam" id="NF002109">
    <property type="entry name" value="PRK00951.1-5"/>
    <property type="match status" value="1"/>
</dbReference>
<dbReference type="NCBIfam" id="NF002111">
    <property type="entry name" value="PRK00951.2-1"/>
    <property type="match status" value="1"/>
</dbReference>
<dbReference type="NCBIfam" id="NF002114">
    <property type="entry name" value="PRK00951.2-4"/>
    <property type="match status" value="1"/>
</dbReference>
<dbReference type="PANTHER" id="PTHR23133:SF2">
    <property type="entry name" value="IMIDAZOLEGLYCEROL-PHOSPHATE DEHYDRATASE"/>
    <property type="match status" value="1"/>
</dbReference>
<dbReference type="PANTHER" id="PTHR23133">
    <property type="entry name" value="IMIDAZOLEGLYCEROL-PHOSPHATE DEHYDRATASE HIS7"/>
    <property type="match status" value="1"/>
</dbReference>
<dbReference type="Pfam" id="PF00475">
    <property type="entry name" value="IGPD"/>
    <property type="match status" value="1"/>
</dbReference>
<dbReference type="SUPFAM" id="SSF54211">
    <property type="entry name" value="Ribosomal protein S5 domain 2-like"/>
    <property type="match status" value="2"/>
</dbReference>
<dbReference type="PROSITE" id="PS00954">
    <property type="entry name" value="IGP_DEHYDRATASE_1"/>
    <property type="match status" value="1"/>
</dbReference>
<dbReference type="PROSITE" id="PS00955">
    <property type="entry name" value="IGP_DEHYDRATASE_2"/>
    <property type="match status" value="1"/>
</dbReference>
<keyword id="KW-0028">Amino-acid biosynthesis</keyword>
<keyword id="KW-0963">Cytoplasm</keyword>
<keyword id="KW-0368">Histidine biosynthesis</keyword>
<keyword id="KW-0456">Lyase</keyword>
<keyword id="KW-1185">Reference proteome</keyword>
<organism>
    <name type="scientific">Nitrosomonas europaea (strain ATCC 19718 / CIP 103999 / KCTC 2705 / NBRC 14298)</name>
    <dbReference type="NCBI Taxonomy" id="228410"/>
    <lineage>
        <taxon>Bacteria</taxon>
        <taxon>Pseudomonadati</taxon>
        <taxon>Pseudomonadota</taxon>
        <taxon>Betaproteobacteria</taxon>
        <taxon>Nitrosomonadales</taxon>
        <taxon>Nitrosomonadaceae</taxon>
        <taxon>Nitrosomonas</taxon>
    </lineage>
</organism>
<proteinExistence type="inferred from homology"/>
<gene>
    <name evidence="1" type="primary">hisB</name>
    <name type="ordered locus">NE0646</name>
</gene>
<feature type="chain" id="PRO_0000158149" description="Imidazoleglycerol-phosphate dehydratase">
    <location>
        <begin position="1"/>
        <end position="197"/>
    </location>
</feature>
<sequence length="197" mass="21643">MLMRTAQVTRNTQETQITVTINLDGQGKAELDSGVPFLDHMLDQIARHGMFDLSVAAKGDLHVDAHHTVEDIGITLGQALNRAVADKKGLVRYGHAYVPLDEALSRVVIDLSGRPGLQFNTTFTRAVIGNFDVDLIQEFFQGFVNHAMVTLHIDNLTGKNAHHQAETIFKAFGRALRMAVTTDPRCDNLIPSTKGVL</sequence>
<comment type="catalytic activity">
    <reaction evidence="1">
        <text>D-erythro-1-(imidazol-4-yl)glycerol 3-phosphate = 3-(imidazol-4-yl)-2-oxopropyl phosphate + H2O</text>
        <dbReference type="Rhea" id="RHEA:11040"/>
        <dbReference type="ChEBI" id="CHEBI:15377"/>
        <dbReference type="ChEBI" id="CHEBI:57766"/>
        <dbReference type="ChEBI" id="CHEBI:58278"/>
        <dbReference type="EC" id="4.2.1.19"/>
    </reaction>
</comment>
<comment type="pathway">
    <text evidence="1">Amino-acid biosynthesis; L-histidine biosynthesis; L-histidine from 5-phospho-alpha-D-ribose 1-diphosphate: step 6/9.</text>
</comment>
<comment type="subcellular location">
    <subcellularLocation>
        <location evidence="1">Cytoplasm</location>
    </subcellularLocation>
</comment>
<comment type="similarity">
    <text evidence="1">Belongs to the imidazoleglycerol-phosphate dehydratase family.</text>
</comment>
<name>HIS7_NITEU</name>